<accession>Q63PH7</accession>
<protein>
    <recommendedName>
        <fullName evidence="1">ATP synthase subunit delta</fullName>
    </recommendedName>
    <alternativeName>
        <fullName evidence="1">ATP synthase F(1) sector subunit delta</fullName>
    </alternativeName>
    <alternativeName>
        <fullName evidence="1">F-type ATPase subunit delta</fullName>
        <shortName evidence="1">F-ATPase subunit delta</shortName>
    </alternativeName>
</protein>
<dbReference type="EMBL" id="BX571965">
    <property type="protein sequence ID" value="CAH37411.1"/>
    <property type="molecule type" value="Genomic_DNA"/>
</dbReference>
<dbReference type="RefSeq" id="WP_004524508.1">
    <property type="nucleotide sequence ID" value="NZ_CP009538.1"/>
</dbReference>
<dbReference type="RefSeq" id="YP_109992.1">
    <property type="nucleotide sequence ID" value="NC_006350.1"/>
</dbReference>
<dbReference type="SMR" id="Q63PH7"/>
<dbReference type="STRING" id="272560.BPSL3399"/>
<dbReference type="KEGG" id="bps:BPSL3399"/>
<dbReference type="PATRIC" id="fig|272560.51.peg.1791"/>
<dbReference type="eggNOG" id="COG0712">
    <property type="taxonomic scope" value="Bacteria"/>
</dbReference>
<dbReference type="Proteomes" id="UP000000605">
    <property type="component" value="Chromosome 1"/>
</dbReference>
<dbReference type="GO" id="GO:0005886">
    <property type="term" value="C:plasma membrane"/>
    <property type="evidence" value="ECO:0007669"/>
    <property type="project" value="UniProtKB-SubCell"/>
</dbReference>
<dbReference type="GO" id="GO:0045259">
    <property type="term" value="C:proton-transporting ATP synthase complex"/>
    <property type="evidence" value="ECO:0007669"/>
    <property type="project" value="UniProtKB-KW"/>
</dbReference>
<dbReference type="GO" id="GO:0046933">
    <property type="term" value="F:proton-transporting ATP synthase activity, rotational mechanism"/>
    <property type="evidence" value="ECO:0007669"/>
    <property type="project" value="UniProtKB-UniRule"/>
</dbReference>
<dbReference type="Gene3D" id="1.10.520.20">
    <property type="entry name" value="N-terminal domain of the delta subunit of the F1F0-ATP synthase"/>
    <property type="match status" value="1"/>
</dbReference>
<dbReference type="HAMAP" id="MF_01416">
    <property type="entry name" value="ATP_synth_delta_bact"/>
    <property type="match status" value="1"/>
</dbReference>
<dbReference type="InterPro" id="IPR026015">
    <property type="entry name" value="ATP_synth_OSCP/delta_N_sf"/>
</dbReference>
<dbReference type="InterPro" id="IPR000711">
    <property type="entry name" value="ATPase_OSCP/dsu"/>
</dbReference>
<dbReference type="NCBIfam" id="TIGR01145">
    <property type="entry name" value="ATP_synt_delta"/>
    <property type="match status" value="1"/>
</dbReference>
<dbReference type="NCBIfam" id="NF004402">
    <property type="entry name" value="PRK05758.2-2"/>
    <property type="match status" value="1"/>
</dbReference>
<dbReference type="PANTHER" id="PTHR11910">
    <property type="entry name" value="ATP SYNTHASE DELTA CHAIN"/>
    <property type="match status" value="1"/>
</dbReference>
<dbReference type="Pfam" id="PF00213">
    <property type="entry name" value="OSCP"/>
    <property type="match status" value="1"/>
</dbReference>
<dbReference type="PRINTS" id="PR00125">
    <property type="entry name" value="ATPASEDELTA"/>
</dbReference>
<dbReference type="SUPFAM" id="SSF47928">
    <property type="entry name" value="N-terminal domain of the delta subunit of the F1F0-ATP synthase"/>
    <property type="match status" value="1"/>
</dbReference>
<proteinExistence type="inferred from homology"/>
<gene>
    <name evidence="1" type="primary">atpH</name>
    <name type="ordered locus">BPSL3399</name>
</gene>
<evidence type="ECO:0000255" key="1">
    <source>
        <dbReference type="HAMAP-Rule" id="MF_01416"/>
    </source>
</evidence>
<reference key="1">
    <citation type="journal article" date="2004" name="Proc. Natl. Acad. Sci. U.S.A.">
        <title>Genomic plasticity of the causative agent of melioidosis, Burkholderia pseudomallei.</title>
        <authorList>
            <person name="Holden M.T.G."/>
            <person name="Titball R.W."/>
            <person name="Peacock S.J."/>
            <person name="Cerdeno-Tarraga A.-M."/>
            <person name="Atkins T."/>
            <person name="Crossman L.C."/>
            <person name="Pitt T."/>
            <person name="Churcher C."/>
            <person name="Mungall K.L."/>
            <person name="Bentley S.D."/>
            <person name="Sebaihia M."/>
            <person name="Thomson N.R."/>
            <person name="Bason N."/>
            <person name="Beacham I.R."/>
            <person name="Brooks K."/>
            <person name="Brown K.A."/>
            <person name="Brown N.F."/>
            <person name="Challis G.L."/>
            <person name="Cherevach I."/>
            <person name="Chillingworth T."/>
            <person name="Cronin A."/>
            <person name="Crossett B."/>
            <person name="Davis P."/>
            <person name="DeShazer D."/>
            <person name="Feltwell T."/>
            <person name="Fraser A."/>
            <person name="Hance Z."/>
            <person name="Hauser H."/>
            <person name="Holroyd S."/>
            <person name="Jagels K."/>
            <person name="Keith K.E."/>
            <person name="Maddison M."/>
            <person name="Moule S."/>
            <person name="Price C."/>
            <person name="Quail M.A."/>
            <person name="Rabbinowitsch E."/>
            <person name="Rutherford K."/>
            <person name="Sanders M."/>
            <person name="Simmonds M."/>
            <person name="Songsivilai S."/>
            <person name="Stevens K."/>
            <person name="Tumapa S."/>
            <person name="Vesaratchavest M."/>
            <person name="Whitehead S."/>
            <person name="Yeats C."/>
            <person name="Barrell B.G."/>
            <person name="Oyston P.C.F."/>
            <person name="Parkhill J."/>
        </authorList>
    </citation>
    <scope>NUCLEOTIDE SEQUENCE [LARGE SCALE GENOMIC DNA]</scope>
    <source>
        <strain>K96243</strain>
    </source>
</reference>
<keyword id="KW-0066">ATP synthesis</keyword>
<keyword id="KW-0997">Cell inner membrane</keyword>
<keyword id="KW-1003">Cell membrane</keyword>
<keyword id="KW-0139">CF(1)</keyword>
<keyword id="KW-0375">Hydrogen ion transport</keyword>
<keyword id="KW-0406">Ion transport</keyword>
<keyword id="KW-0472">Membrane</keyword>
<keyword id="KW-1185">Reference proteome</keyword>
<keyword id="KW-0813">Transport</keyword>
<feature type="chain" id="PRO_0000370925" description="ATP synthase subunit delta">
    <location>
        <begin position="1"/>
        <end position="179"/>
    </location>
</feature>
<name>ATPD_BURPS</name>
<sequence length="179" mass="18987">MAELATIARPYAEALFRVAEGGDISAWSTLVQELAQVAQLPEVLSVASSPKVSRTQVAELLLAALKSPLASGAQAKNFVQMLVDNHRIALLPEIAEQFEALKNAREGAADVQIVSAFPLEGAQLAELVTSLERKFKRKLKPAVEVDSSLIGGVRVTVGDEVLDTSVRARLAGMQAALTA</sequence>
<organism>
    <name type="scientific">Burkholderia pseudomallei (strain K96243)</name>
    <dbReference type="NCBI Taxonomy" id="272560"/>
    <lineage>
        <taxon>Bacteria</taxon>
        <taxon>Pseudomonadati</taxon>
        <taxon>Pseudomonadota</taxon>
        <taxon>Betaproteobacteria</taxon>
        <taxon>Burkholderiales</taxon>
        <taxon>Burkholderiaceae</taxon>
        <taxon>Burkholderia</taxon>
        <taxon>pseudomallei group</taxon>
    </lineage>
</organism>
<comment type="function">
    <text evidence="1">F(1)F(0) ATP synthase produces ATP from ADP in the presence of a proton or sodium gradient. F-type ATPases consist of two structural domains, F(1) containing the extramembraneous catalytic core and F(0) containing the membrane proton channel, linked together by a central stalk and a peripheral stalk. During catalysis, ATP synthesis in the catalytic domain of F(1) is coupled via a rotary mechanism of the central stalk subunits to proton translocation.</text>
</comment>
<comment type="function">
    <text evidence="1">This protein is part of the stalk that links CF(0) to CF(1). It either transmits conformational changes from CF(0) to CF(1) or is implicated in proton conduction.</text>
</comment>
<comment type="subunit">
    <text evidence="1">F-type ATPases have 2 components, F(1) - the catalytic core - and F(0) - the membrane proton channel. F(1) has five subunits: alpha(3), beta(3), gamma(1), delta(1), epsilon(1). F(0) has three main subunits: a(1), b(2) and c(10-14). The alpha and beta chains form an alternating ring which encloses part of the gamma chain. F(1) is attached to F(0) by a central stalk formed by the gamma and epsilon chains, while a peripheral stalk is formed by the delta and b chains.</text>
</comment>
<comment type="subcellular location">
    <subcellularLocation>
        <location evidence="1">Cell inner membrane</location>
        <topology evidence="1">Peripheral membrane protein</topology>
    </subcellularLocation>
</comment>
<comment type="similarity">
    <text evidence="1">Belongs to the ATPase delta chain family.</text>
</comment>